<comment type="function">
    <text evidence="1">Catalyzes the interconversion of methylthioribose-1-phosphate (MTR-1-P) into methylthioribulose-1-phosphate (MTRu-1-P).</text>
</comment>
<comment type="catalytic activity">
    <reaction evidence="1">
        <text>5-(methylsulfanyl)-alpha-D-ribose 1-phosphate = 5-(methylsulfanyl)-D-ribulose 1-phosphate</text>
        <dbReference type="Rhea" id="RHEA:19989"/>
        <dbReference type="ChEBI" id="CHEBI:58533"/>
        <dbReference type="ChEBI" id="CHEBI:58548"/>
        <dbReference type="EC" id="5.3.1.23"/>
    </reaction>
</comment>
<comment type="pathway">
    <text evidence="1">Amino-acid biosynthesis; L-methionine biosynthesis via salvage pathway; L-methionine from S-methyl-5-thio-alpha-D-ribose 1-phosphate: step 1/6.</text>
</comment>
<comment type="subcellular location">
    <subcellularLocation>
        <location evidence="1">Cytoplasm</location>
    </subcellularLocation>
    <subcellularLocation>
        <location evidence="1">Nucleus</location>
    </subcellularLocation>
</comment>
<comment type="similarity">
    <text evidence="1">Belongs to the eIF-2B alpha/beta/delta subunits family. MtnA subfamily.</text>
</comment>
<organism>
    <name type="scientific">Aspergillus clavatus (strain ATCC 1007 / CBS 513.65 / DSM 816 / NCTC 3887 / NRRL 1 / QM 1276 / 107)</name>
    <dbReference type="NCBI Taxonomy" id="344612"/>
    <lineage>
        <taxon>Eukaryota</taxon>
        <taxon>Fungi</taxon>
        <taxon>Dikarya</taxon>
        <taxon>Ascomycota</taxon>
        <taxon>Pezizomycotina</taxon>
        <taxon>Eurotiomycetes</taxon>
        <taxon>Eurotiomycetidae</taxon>
        <taxon>Eurotiales</taxon>
        <taxon>Aspergillaceae</taxon>
        <taxon>Aspergillus</taxon>
        <taxon>Aspergillus subgen. Fumigati</taxon>
    </lineage>
</organism>
<reference key="1">
    <citation type="journal article" date="2008" name="PLoS Genet.">
        <title>Genomic islands in the pathogenic filamentous fungus Aspergillus fumigatus.</title>
        <authorList>
            <person name="Fedorova N.D."/>
            <person name="Khaldi N."/>
            <person name="Joardar V.S."/>
            <person name="Maiti R."/>
            <person name="Amedeo P."/>
            <person name="Anderson M.J."/>
            <person name="Crabtree J."/>
            <person name="Silva J.C."/>
            <person name="Badger J.H."/>
            <person name="Albarraq A."/>
            <person name="Angiuoli S."/>
            <person name="Bussey H."/>
            <person name="Bowyer P."/>
            <person name="Cotty P.J."/>
            <person name="Dyer P.S."/>
            <person name="Egan A."/>
            <person name="Galens K."/>
            <person name="Fraser-Liggett C.M."/>
            <person name="Haas B.J."/>
            <person name="Inman J.M."/>
            <person name="Kent R."/>
            <person name="Lemieux S."/>
            <person name="Malavazi I."/>
            <person name="Orvis J."/>
            <person name="Roemer T."/>
            <person name="Ronning C.M."/>
            <person name="Sundaram J.P."/>
            <person name="Sutton G."/>
            <person name="Turner G."/>
            <person name="Venter J.C."/>
            <person name="White O.R."/>
            <person name="Whitty B.R."/>
            <person name="Youngman P."/>
            <person name="Wolfe K.H."/>
            <person name="Goldman G.H."/>
            <person name="Wortman J.R."/>
            <person name="Jiang B."/>
            <person name="Denning D.W."/>
            <person name="Nierman W.C."/>
        </authorList>
    </citation>
    <scope>NUCLEOTIDE SEQUENCE [LARGE SCALE GENOMIC DNA]</scope>
    <source>
        <strain>ATCC 1007 / CBS 513.65 / DSM 816 / NCTC 3887 / NRRL 1 / QM 1276 / 107</strain>
    </source>
</reference>
<dbReference type="EC" id="5.3.1.23" evidence="1"/>
<dbReference type="EMBL" id="DS027054">
    <property type="protein sequence ID" value="EAW10044.1"/>
    <property type="molecule type" value="Genomic_DNA"/>
</dbReference>
<dbReference type="RefSeq" id="XP_001271470.1">
    <property type="nucleotide sequence ID" value="XM_001271469.1"/>
</dbReference>
<dbReference type="SMR" id="A1CGN9"/>
<dbReference type="STRING" id="344612.A1CGN9"/>
<dbReference type="EnsemblFungi" id="EAW10044">
    <property type="protein sequence ID" value="EAW10044"/>
    <property type="gene ID" value="ACLA_045090"/>
</dbReference>
<dbReference type="GeneID" id="4704247"/>
<dbReference type="KEGG" id="act:ACLA_045090"/>
<dbReference type="VEuPathDB" id="FungiDB:ACLA_045090"/>
<dbReference type="eggNOG" id="KOG1468">
    <property type="taxonomic scope" value="Eukaryota"/>
</dbReference>
<dbReference type="HOGENOM" id="CLU_016218_1_3_1"/>
<dbReference type="OMA" id="CETRPLN"/>
<dbReference type="OrthoDB" id="2461at2759"/>
<dbReference type="UniPathway" id="UPA00904">
    <property type="reaction ID" value="UER00874"/>
</dbReference>
<dbReference type="Proteomes" id="UP000006701">
    <property type="component" value="Unassembled WGS sequence"/>
</dbReference>
<dbReference type="GO" id="GO:0005737">
    <property type="term" value="C:cytoplasm"/>
    <property type="evidence" value="ECO:0007669"/>
    <property type="project" value="UniProtKB-SubCell"/>
</dbReference>
<dbReference type="GO" id="GO:0005634">
    <property type="term" value="C:nucleus"/>
    <property type="evidence" value="ECO:0007669"/>
    <property type="project" value="UniProtKB-SubCell"/>
</dbReference>
<dbReference type="GO" id="GO:0046523">
    <property type="term" value="F:S-methyl-5-thioribose-1-phosphate isomerase activity"/>
    <property type="evidence" value="ECO:0007669"/>
    <property type="project" value="UniProtKB-UniRule"/>
</dbReference>
<dbReference type="GO" id="GO:0019509">
    <property type="term" value="P:L-methionine salvage from methylthioadenosine"/>
    <property type="evidence" value="ECO:0007669"/>
    <property type="project" value="UniProtKB-UniRule"/>
</dbReference>
<dbReference type="FunFam" id="1.20.120.420:FF:000002">
    <property type="entry name" value="Methylthioribose-1-phosphate isomerase"/>
    <property type="match status" value="1"/>
</dbReference>
<dbReference type="FunFam" id="3.40.50.10470:FF:000003">
    <property type="entry name" value="Methylthioribose-1-phosphate isomerase"/>
    <property type="match status" value="1"/>
</dbReference>
<dbReference type="Gene3D" id="1.20.120.420">
    <property type="entry name" value="translation initiation factor eif-2b, domain 1"/>
    <property type="match status" value="1"/>
</dbReference>
<dbReference type="Gene3D" id="3.40.50.10470">
    <property type="entry name" value="Translation initiation factor eif-2b, domain 2"/>
    <property type="match status" value="1"/>
</dbReference>
<dbReference type="HAMAP" id="MF_01678">
    <property type="entry name" value="Salvage_MtnA"/>
    <property type="match status" value="1"/>
</dbReference>
<dbReference type="InterPro" id="IPR000649">
    <property type="entry name" value="IF-2B-related"/>
</dbReference>
<dbReference type="InterPro" id="IPR005251">
    <property type="entry name" value="IF-M1Pi"/>
</dbReference>
<dbReference type="InterPro" id="IPR042529">
    <property type="entry name" value="IF_2B-like_C"/>
</dbReference>
<dbReference type="InterPro" id="IPR011559">
    <property type="entry name" value="Initiation_fac_2B_a/b/d"/>
</dbReference>
<dbReference type="InterPro" id="IPR027363">
    <property type="entry name" value="M1Pi_N"/>
</dbReference>
<dbReference type="InterPro" id="IPR037171">
    <property type="entry name" value="NagB/RpiA_transferase-like"/>
</dbReference>
<dbReference type="NCBIfam" id="TIGR00524">
    <property type="entry name" value="eIF-2B_rel"/>
    <property type="match status" value="1"/>
</dbReference>
<dbReference type="NCBIfam" id="NF004326">
    <property type="entry name" value="PRK05720.1"/>
    <property type="match status" value="1"/>
</dbReference>
<dbReference type="NCBIfam" id="TIGR00512">
    <property type="entry name" value="salvage_mtnA"/>
    <property type="match status" value="1"/>
</dbReference>
<dbReference type="PANTHER" id="PTHR43475">
    <property type="entry name" value="METHYLTHIORIBOSE-1-PHOSPHATE ISOMERASE"/>
    <property type="match status" value="1"/>
</dbReference>
<dbReference type="PANTHER" id="PTHR43475:SF1">
    <property type="entry name" value="METHYLTHIORIBOSE-1-PHOSPHATE ISOMERASE"/>
    <property type="match status" value="1"/>
</dbReference>
<dbReference type="Pfam" id="PF01008">
    <property type="entry name" value="IF-2B"/>
    <property type="match status" value="1"/>
</dbReference>
<dbReference type="SUPFAM" id="SSF100950">
    <property type="entry name" value="NagB/RpiA/CoA transferase-like"/>
    <property type="match status" value="1"/>
</dbReference>
<keyword id="KW-0028">Amino-acid biosynthesis</keyword>
<keyword id="KW-0963">Cytoplasm</keyword>
<keyword id="KW-0413">Isomerase</keyword>
<keyword id="KW-0486">Methionine biosynthesis</keyword>
<keyword id="KW-0539">Nucleus</keyword>
<keyword id="KW-1185">Reference proteome</keyword>
<evidence type="ECO:0000255" key="1">
    <source>
        <dbReference type="HAMAP-Rule" id="MF_03119"/>
    </source>
</evidence>
<sequence>MTLEAIRYSTGKLVIIDQLQLPYVEKYIEVPTSKDAWHAIKKMRVRGAPAIAIVAALALASELHTLMAHDKLSNRAEEVRLFIQEKLDYLVSSRPTAVNLSDAARKLAAHVSDHAEMPNSTGRAVAEAFIQAAEEMLAKDLKDNTNIGKYGAEWIIRNALAGGRSKATILTHCNTGSLATSGYGTALGVIRALASKNALAYAYCTETRPYNQGSRLTAYELVHENLPATLVTDSMVAALLAKAEAAVDAIVVGADRVAANGDTANKIGTYALAVLAKFHGVKFLVAAPLTTIDRSTKSGADIVIEERPASEVTTIKGAVETESSCDRIKLETVRIAAEGIHVWNPAFDVTPSALIDAIITERGVVERGTDGRYNFDGIFEDHSAF</sequence>
<gene>
    <name type="primary">mri1</name>
    <name type="ORF">ACLA_045090</name>
</gene>
<proteinExistence type="inferred from homology"/>
<feature type="chain" id="PRO_0000402012" description="Methylthioribose-1-phosphate isomerase">
    <location>
        <begin position="1"/>
        <end position="385"/>
    </location>
</feature>
<feature type="active site" description="Proton donor" evidence="1">
    <location>
        <position position="255"/>
    </location>
</feature>
<feature type="site" description="Transition state stabilizer" evidence="1">
    <location>
        <position position="173"/>
    </location>
</feature>
<accession>A1CGN9</accession>
<protein>
    <recommendedName>
        <fullName evidence="1">Methylthioribose-1-phosphate isomerase</fullName>
        <shortName evidence="1">M1Pi</shortName>
        <shortName evidence="1">MTR-1-P isomerase</shortName>
        <ecNumber evidence="1">5.3.1.23</ecNumber>
    </recommendedName>
    <alternativeName>
        <fullName evidence="1">S-methyl-5-thioribose-1-phosphate isomerase</fullName>
    </alternativeName>
    <alternativeName>
        <fullName evidence="1">Translation initiation factor eIF-2B subunit alpha/beta/delta-like protein</fullName>
    </alternativeName>
</protein>
<name>MTNA_ASPCL</name>